<accession>Q9ZL08</accession>
<feature type="chain" id="PRO_0000104945" description="DNA-binding protein HU">
    <location>
        <begin position="1"/>
        <end position="94"/>
    </location>
</feature>
<organism>
    <name type="scientific">Helicobacter pylori (strain J99 / ATCC 700824)</name>
    <name type="common">Campylobacter pylori J99</name>
    <dbReference type="NCBI Taxonomy" id="85963"/>
    <lineage>
        <taxon>Bacteria</taxon>
        <taxon>Pseudomonadati</taxon>
        <taxon>Campylobacterota</taxon>
        <taxon>Epsilonproteobacteria</taxon>
        <taxon>Campylobacterales</taxon>
        <taxon>Helicobacteraceae</taxon>
        <taxon>Helicobacter</taxon>
    </lineage>
</organism>
<protein>
    <recommendedName>
        <fullName>DNA-binding protein HU</fullName>
    </recommendedName>
</protein>
<comment type="function">
    <text evidence="1">Histone-like DNA-binding protein which is capable of wrapping DNA to stabilize it, and thus to prevent its denaturation under extreme environmental conditions.</text>
</comment>
<comment type="subunit">
    <text evidence="1">Homodimer.</text>
</comment>
<comment type="similarity">
    <text evidence="2">Belongs to the bacterial histone-like protein family.</text>
</comment>
<reference key="1">
    <citation type="journal article" date="1999" name="Nature">
        <title>Genomic sequence comparison of two unrelated isolates of the human gastric pathogen Helicobacter pylori.</title>
        <authorList>
            <person name="Alm R.A."/>
            <person name="Ling L.-S.L."/>
            <person name="Moir D.T."/>
            <person name="King B.L."/>
            <person name="Brown E.D."/>
            <person name="Doig P.C."/>
            <person name="Smith D.R."/>
            <person name="Noonan B."/>
            <person name="Guild B.C."/>
            <person name="deJonge B.L."/>
            <person name="Carmel G."/>
            <person name="Tummino P.J."/>
            <person name="Caruso A."/>
            <person name="Uria-Nickelsen M."/>
            <person name="Mills D.M."/>
            <person name="Ives C."/>
            <person name="Gibson R."/>
            <person name="Merberg D."/>
            <person name="Mills S.D."/>
            <person name="Jiang Q."/>
            <person name="Taylor D.E."/>
            <person name="Vovis G.F."/>
            <person name="Trust T.J."/>
        </authorList>
    </citation>
    <scope>NUCLEOTIDE SEQUENCE [LARGE SCALE GENOMIC DNA]</scope>
    <source>
        <strain>J99 / ATCC 700824</strain>
    </source>
</reference>
<name>DBH_HELPJ</name>
<gene>
    <name type="primary">hup</name>
    <name type="ordered locus">jhp_0774</name>
</gene>
<evidence type="ECO:0000250" key="1"/>
<evidence type="ECO:0000305" key="2"/>
<sequence length="94" mass="10408">MNKAEFIDLVKKAGKYNSKREAEEAINAFTLAVETALSKGESVELVGFGKFETAEQKGKEGKVPGSDKTYKTEDKRVPKFKPGKILKQKVEEGK</sequence>
<proteinExistence type="inferred from homology"/>
<keyword id="KW-0226">DNA condensation</keyword>
<keyword id="KW-0238">DNA-binding</keyword>
<dbReference type="EMBL" id="AE001439">
    <property type="protein sequence ID" value="AAD06354.1"/>
    <property type="molecule type" value="Genomic_DNA"/>
</dbReference>
<dbReference type="PIR" id="H71888">
    <property type="entry name" value="H71888"/>
</dbReference>
<dbReference type="RefSeq" id="WP_001029103.1">
    <property type="nucleotide sequence ID" value="NC_000921.1"/>
</dbReference>
<dbReference type="SMR" id="Q9ZL08"/>
<dbReference type="KEGG" id="hpj:jhp_0774"/>
<dbReference type="PATRIC" id="fig|85963.30.peg.201"/>
<dbReference type="eggNOG" id="COG0776">
    <property type="taxonomic scope" value="Bacteria"/>
</dbReference>
<dbReference type="Proteomes" id="UP000000804">
    <property type="component" value="Chromosome"/>
</dbReference>
<dbReference type="GO" id="GO:0005829">
    <property type="term" value="C:cytosol"/>
    <property type="evidence" value="ECO:0007669"/>
    <property type="project" value="TreeGrafter"/>
</dbReference>
<dbReference type="GO" id="GO:0003677">
    <property type="term" value="F:DNA binding"/>
    <property type="evidence" value="ECO:0007669"/>
    <property type="project" value="UniProtKB-KW"/>
</dbReference>
<dbReference type="GO" id="GO:0030527">
    <property type="term" value="F:structural constituent of chromatin"/>
    <property type="evidence" value="ECO:0007669"/>
    <property type="project" value="InterPro"/>
</dbReference>
<dbReference type="GO" id="GO:0030261">
    <property type="term" value="P:chromosome condensation"/>
    <property type="evidence" value="ECO:0007669"/>
    <property type="project" value="UniProtKB-KW"/>
</dbReference>
<dbReference type="FunFam" id="4.10.520.10:FF:000014">
    <property type="entry name" value="DNA-binding protein HU"/>
    <property type="match status" value="1"/>
</dbReference>
<dbReference type="Gene3D" id="4.10.520.10">
    <property type="entry name" value="IHF-like DNA-binding proteins"/>
    <property type="match status" value="1"/>
</dbReference>
<dbReference type="InterPro" id="IPR000119">
    <property type="entry name" value="Hist_DNA-bd"/>
</dbReference>
<dbReference type="InterPro" id="IPR010992">
    <property type="entry name" value="IHF-like_DNA-bd_dom_sf"/>
</dbReference>
<dbReference type="PANTHER" id="PTHR33175">
    <property type="entry name" value="DNA-BINDING PROTEIN HU"/>
    <property type="match status" value="1"/>
</dbReference>
<dbReference type="PANTHER" id="PTHR33175:SF3">
    <property type="entry name" value="DNA-BINDING PROTEIN HU-BETA"/>
    <property type="match status" value="1"/>
</dbReference>
<dbReference type="Pfam" id="PF00216">
    <property type="entry name" value="Bac_DNA_binding"/>
    <property type="match status" value="1"/>
</dbReference>
<dbReference type="PRINTS" id="PR01727">
    <property type="entry name" value="DNABINDINGHU"/>
</dbReference>
<dbReference type="SMART" id="SM00411">
    <property type="entry name" value="BHL"/>
    <property type="match status" value="1"/>
</dbReference>
<dbReference type="SUPFAM" id="SSF47729">
    <property type="entry name" value="IHF-like DNA-binding proteins"/>
    <property type="match status" value="1"/>
</dbReference>